<accession>Q9LUU3</accession>
<protein>
    <recommendedName>
        <fullName>Putative F-box/kelch-repeat protein At3g17280</fullName>
    </recommendedName>
</protein>
<keyword id="KW-0880">Kelch repeat</keyword>
<keyword id="KW-1185">Reference proteome</keyword>
<keyword id="KW-0677">Repeat</keyword>
<gene>
    <name type="ordered locus">At3g17280</name>
    <name type="ORF">MGD8.12</name>
</gene>
<proteinExistence type="predicted"/>
<dbReference type="EMBL" id="AB022216">
    <property type="protein sequence ID" value="BAB02732.1"/>
    <property type="molecule type" value="Genomic_DNA"/>
</dbReference>
<dbReference type="EMBL" id="CP002686">
    <property type="protein sequence ID" value="AEE75932.1"/>
    <property type="molecule type" value="Genomic_DNA"/>
</dbReference>
<dbReference type="EMBL" id="CP002686">
    <property type="protein sequence ID" value="ANM64343.1"/>
    <property type="molecule type" value="Genomic_DNA"/>
</dbReference>
<dbReference type="RefSeq" id="NP_001319575.1">
    <property type="nucleotide sequence ID" value="NM_001338280.1"/>
</dbReference>
<dbReference type="RefSeq" id="NP_188354.1">
    <property type="nucleotide sequence ID" value="NM_112606.1"/>
</dbReference>
<dbReference type="BioGRID" id="6324">
    <property type="interactions" value="2"/>
</dbReference>
<dbReference type="FunCoup" id="Q9LUU3">
    <property type="interactions" value="6"/>
</dbReference>
<dbReference type="PaxDb" id="3702-AT3G17280.1"/>
<dbReference type="ProteomicsDB" id="230933"/>
<dbReference type="DNASU" id="820991"/>
<dbReference type="EnsemblPlants" id="AT3G17280.1">
    <property type="protein sequence ID" value="AT3G17280.1"/>
    <property type="gene ID" value="AT3G17280"/>
</dbReference>
<dbReference type="EnsemblPlants" id="AT3G17280.2">
    <property type="protein sequence ID" value="AT3G17280.2"/>
    <property type="gene ID" value="AT3G17280"/>
</dbReference>
<dbReference type="GeneID" id="820991"/>
<dbReference type="Gramene" id="AT3G17280.1">
    <property type="protein sequence ID" value="AT3G17280.1"/>
    <property type="gene ID" value="AT3G17280"/>
</dbReference>
<dbReference type="Gramene" id="AT3G17280.2">
    <property type="protein sequence ID" value="AT3G17280.2"/>
    <property type="gene ID" value="AT3G17280"/>
</dbReference>
<dbReference type="KEGG" id="ath:AT3G17280"/>
<dbReference type="Araport" id="AT3G17280"/>
<dbReference type="TAIR" id="AT3G17280"/>
<dbReference type="HOGENOM" id="CLU_034692_1_0_1"/>
<dbReference type="InParanoid" id="Q9LUU3"/>
<dbReference type="OMA" id="ANCFIEC"/>
<dbReference type="PhylomeDB" id="Q9LUU3"/>
<dbReference type="PRO" id="PR:Q9LUU3"/>
<dbReference type="Proteomes" id="UP000006548">
    <property type="component" value="Chromosome 3"/>
</dbReference>
<dbReference type="ExpressionAtlas" id="Q9LUU3">
    <property type="expression patterns" value="baseline and differential"/>
</dbReference>
<dbReference type="CDD" id="cd22157">
    <property type="entry name" value="F-box_AtFBW1-like"/>
    <property type="match status" value="1"/>
</dbReference>
<dbReference type="Gene3D" id="1.20.1280.50">
    <property type="match status" value="1"/>
</dbReference>
<dbReference type="InterPro" id="IPR006527">
    <property type="entry name" value="F-box-assoc_dom_typ1"/>
</dbReference>
<dbReference type="InterPro" id="IPR017451">
    <property type="entry name" value="F-box-assoc_interact_dom"/>
</dbReference>
<dbReference type="InterPro" id="IPR036047">
    <property type="entry name" value="F-box-like_dom_sf"/>
</dbReference>
<dbReference type="InterPro" id="IPR001810">
    <property type="entry name" value="F-box_dom"/>
</dbReference>
<dbReference type="InterPro" id="IPR050796">
    <property type="entry name" value="SCF_F-box_component"/>
</dbReference>
<dbReference type="NCBIfam" id="TIGR01640">
    <property type="entry name" value="F_box_assoc_1"/>
    <property type="match status" value="1"/>
</dbReference>
<dbReference type="PANTHER" id="PTHR31672">
    <property type="entry name" value="BNACNNG10540D PROTEIN"/>
    <property type="match status" value="1"/>
</dbReference>
<dbReference type="Pfam" id="PF00646">
    <property type="entry name" value="F-box"/>
    <property type="match status" value="1"/>
</dbReference>
<dbReference type="Pfam" id="PF07734">
    <property type="entry name" value="FBA_1"/>
    <property type="match status" value="1"/>
</dbReference>
<dbReference type="SMART" id="SM00256">
    <property type="entry name" value="FBOX"/>
    <property type="match status" value="1"/>
</dbReference>
<dbReference type="SUPFAM" id="SSF81383">
    <property type="entry name" value="F-box domain"/>
    <property type="match status" value="1"/>
</dbReference>
<dbReference type="SUPFAM" id="SSF50729">
    <property type="entry name" value="PH domain-like"/>
    <property type="match status" value="1"/>
</dbReference>
<dbReference type="PROSITE" id="PS50181">
    <property type="entry name" value="FBOX"/>
    <property type="match status" value="1"/>
</dbReference>
<reference key="1">
    <citation type="journal article" date="2000" name="DNA Res.">
        <title>Structural analysis of Arabidopsis thaliana chromosome 3. I. Sequence features of the regions of 4,504,864 bp covered by sixty P1 and TAC clones.</title>
        <authorList>
            <person name="Sato S."/>
            <person name="Nakamura Y."/>
            <person name="Kaneko T."/>
            <person name="Katoh T."/>
            <person name="Asamizu E."/>
            <person name="Tabata S."/>
        </authorList>
    </citation>
    <scope>NUCLEOTIDE SEQUENCE [LARGE SCALE GENOMIC DNA]</scope>
    <source>
        <strain>cv. Columbia</strain>
    </source>
</reference>
<reference key="2">
    <citation type="journal article" date="2017" name="Plant J.">
        <title>Araport11: a complete reannotation of the Arabidopsis thaliana reference genome.</title>
        <authorList>
            <person name="Cheng C.Y."/>
            <person name="Krishnakumar V."/>
            <person name="Chan A.P."/>
            <person name="Thibaud-Nissen F."/>
            <person name="Schobel S."/>
            <person name="Town C.D."/>
        </authorList>
    </citation>
    <scope>GENOME REANNOTATION</scope>
    <source>
        <strain>cv. Columbia</strain>
    </source>
</reference>
<name>FBK58_ARATH</name>
<feature type="chain" id="PRO_0000283218" description="Putative F-box/kelch-repeat protein At3g17280">
    <location>
        <begin position="1"/>
        <end position="386"/>
    </location>
</feature>
<feature type="domain" description="F-box" evidence="1">
    <location>
        <begin position="1"/>
        <end position="48"/>
    </location>
</feature>
<feature type="repeat" description="Kelch 1">
    <location>
        <begin position="155"/>
        <end position="203"/>
    </location>
</feature>
<feature type="repeat" description="Kelch 2">
    <location>
        <begin position="340"/>
        <end position="386"/>
    </location>
</feature>
<evidence type="ECO:0000255" key="1">
    <source>
        <dbReference type="PROSITE-ProRule" id="PRU00080"/>
    </source>
</evidence>
<sequence length="386" mass="43944">MTTISDLPYDLLPEILSRLPTKSIPKLKTTCKKWYALFKDPKFVEKKLGKAARETVFLMNHEVNSISVDIHGIPKGYSVSMDFTGTLTIPEGSDLEIFRIHHCNGLFLCATMNCRLVVWNPCTGQITWIIPRTRYDSDDIYALGCGDDKSSSLHSYKILRCCDDNQKKPVSEIYDFSSSSWRVLDGVTANCFIECNGVALKESAYWYASDKRETPKGKFILRFDFATERFARLCLPLNFQRDRDNKSVVVSVVGEEKLALLQQFDHRVHGLKYSKIKIWVTDTKIGEGKDLSWSNILVEELADDNLPSVTSFLLDEEKKVAVCSDAVCSDTDTEDEDRRRIYIVGEGVDEFVYDEVSTETSHNWPFLVSYVPNLVHIEKDAPIVEV</sequence>
<organism>
    <name type="scientific">Arabidopsis thaliana</name>
    <name type="common">Mouse-ear cress</name>
    <dbReference type="NCBI Taxonomy" id="3702"/>
    <lineage>
        <taxon>Eukaryota</taxon>
        <taxon>Viridiplantae</taxon>
        <taxon>Streptophyta</taxon>
        <taxon>Embryophyta</taxon>
        <taxon>Tracheophyta</taxon>
        <taxon>Spermatophyta</taxon>
        <taxon>Magnoliopsida</taxon>
        <taxon>eudicotyledons</taxon>
        <taxon>Gunneridae</taxon>
        <taxon>Pentapetalae</taxon>
        <taxon>rosids</taxon>
        <taxon>malvids</taxon>
        <taxon>Brassicales</taxon>
        <taxon>Brassicaceae</taxon>
        <taxon>Camelineae</taxon>
        <taxon>Arabidopsis</taxon>
    </lineage>
</organism>